<name>PRL2_ALLMI</name>
<reference key="1">
    <citation type="journal article" date="1992" name="Int. J. Pept. Protein Res.">
        <title>Isolation and characterization of glycosylated and non-glycosylated prolactins from alligator and crocodile.</title>
        <authorList>
            <person name="Noso T."/>
            <person name="Swanson P."/>
            <person name="Lance V.A."/>
            <person name="Kawauchi H."/>
        </authorList>
    </citation>
    <scope>PROTEIN SEQUENCE</scope>
    <source>
        <tissue>Pituitary</tissue>
    </source>
</reference>
<organism>
    <name type="scientific">Alligator mississippiensis</name>
    <name type="common">American alligator</name>
    <dbReference type="NCBI Taxonomy" id="8496"/>
    <lineage>
        <taxon>Eukaryota</taxon>
        <taxon>Metazoa</taxon>
        <taxon>Chordata</taxon>
        <taxon>Craniata</taxon>
        <taxon>Vertebrata</taxon>
        <taxon>Euteleostomi</taxon>
        <taxon>Archelosauria</taxon>
        <taxon>Archosauria</taxon>
        <taxon>Crocodylia</taxon>
        <taxon>Alligatoridae</taxon>
        <taxon>Alligatorinae</taxon>
        <taxon>Alligator</taxon>
    </lineage>
</organism>
<dbReference type="SMR" id="P55752"/>
<dbReference type="eggNOG" id="ENOG502QYU3">
    <property type="taxonomic scope" value="Eukaryota"/>
</dbReference>
<dbReference type="GO" id="GO:0005615">
    <property type="term" value="C:extracellular space"/>
    <property type="evidence" value="ECO:0007669"/>
    <property type="project" value="TreeGrafter"/>
</dbReference>
<dbReference type="GO" id="GO:0005179">
    <property type="term" value="F:hormone activity"/>
    <property type="evidence" value="ECO:0007669"/>
    <property type="project" value="UniProtKB-KW"/>
</dbReference>
<dbReference type="GO" id="GO:0008284">
    <property type="term" value="P:positive regulation of cell population proliferation"/>
    <property type="evidence" value="ECO:0007669"/>
    <property type="project" value="TreeGrafter"/>
</dbReference>
<dbReference type="GO" id="GO:0046427">
    <property type="term" value="P:positive regulation of receptor signaling pathway via JAK-STAT"/>
    <property type="evidence" value="ECO:0007669"/>
    <property type="project" value="TreeGrafter"/>
</dbReference>
<dbReference type="GO" id="GO:0031667">
    <property type="term" value="P:response to nutrient levels"/>
    <property type="evidence" value="ECO:0007669"/>
    <property type="project" value="TreeGrafter"/>
</dbReference>
<dbReference type="CDD" id="cd10288">
    <property type="entry name" value="prolactin_like"/>
    <property type="match status" value="1"/>
</dbReference>
<dbReference type="FunFam" id="1.20.1250.10:FF:000003">
    <property type="entry name" value="Prolactin"/>
    <property type="match status" value="1"/>
</dbReference>
<dbReference type="Gene3D" id="1.20.1250.10">
    <property type="match status" value="1"/>
</dbReference>
<dbReference type="InterPro" id="IPR009079">
    <property type="entry name" value="4_helix_cytokine-like_core"/>
</dbReference>
<dbReference type="InterPro" id="IPR001400">
    <property type="entry name" value="Somatotropin/Prolactin"/>
</dbReference>
<dbReference type="InterPro" id="IPR018116">
    <property type="entry name" value="Somatotropin_CS"/>
</dbReference>
<dbReference type="PANTHER" id="PTHR11417:SF5">
    <property type="entry name" value="PROLACTIN"/>
    <property type="match status" value="1"/>
</dbReference>
<dbReference type="PANTHER" id="PTHR11417">
    <property type="entry name" value="SOMATOTROPIN,PROLACTIN"/>
    <property type="match status" value="1"/>
</dbReference>
<dbReference type="Pfam" id="PF00103">
    <property type="entry name" value="Hormone_1"/>
    <property type="match status" value="1"/>
</dbReference>
<dbReference type="PRINTS" id="PR00836">
    <property type="entry name" value="SOMATOTROPIN"/>
</dbReference>
<dbReference type="SUPFAM" id="SSF47266">
    <property type="entry name" value="4-helical cytokines"/>
    <property type="match status" value="1"/>
</dbReference>
<dbReference type="PROSITE" id="PS00266">
    <property type="entry name" value="SOMATOTROPIN_1"/>
    <property type="match status" value="1"/>
</dbReference>
<comment type="subcellular location">
    <subcellularLocation>
        <location>Secreted</location>
    </subcellularLocation>
</comment>
<comment type="similarity">
    <text evidence="2">Belongs to the somatotropin/prolactin family.</text>
</comment>
<accession>P55752</accession>
<keyword id="KW-0903">Direct protein sequencing</keyword>
<keyword id="KW-1015">Disulfide bond</keyword>
<keyword id="KW-0372">Hormone</keyword>
<keyword id="KW-0964">Secreted</keyword>
<evidence type="ECO:0000250" key="1"/>
<evidence type="ECO:0000305" key="2"/>
<feature type="chain" id="PRO_0000181322" description="Prolactin-2">
    <location>
        <begin position="1"/>
        <end position="199"/>
    </location>
</feature>
<feature type="disulfide bond" evidence="1">
    <location>
        <begin position="4"/>
        <end position="11"/>
    </location>
</feature>
<feature type="disulfide bond" evidence="1">
    <location>
        <begin position="58"/>
        <end position="174"/>
    </location>
</feature>
<feature type="disulfide bond" evidence="1">
    <location>
        <begin position="191"/>
        <end position="199"/>
    </location>
</feature>
<sequence length="199" mass="22743">LPICPSGSVNCQVSLGELFDRAVKLSHYIHFLSSEMFNEFDERYAQGRGFITKAVNGCHTASLTTPEDKEQAQQIHHEDLLNLVLGVLRSWNDPLLHLVTEVQRIKEAPDTILWKAVEIEEQNKRLLEGMEKIVGRVQPGDTGNEVYSRWSGLPSLQLADEDSRLFAFYNLLHCGRRDSHKIDNYLKLLKCRLIHDSNC</sequence>
<protein>
    <recommendedName>
        <fullName>Prolactin-2</fullName>
    </recommendedName>
    <alternativeName>
        <fullName>Prolactin II</fullName>
        <shortName>PRL-II</shortName>
    </alternativeName>
</protein>
<proteinExistence type="evidence at protein level"/>